<keyword id="KW-0687">Ribonucleoprotein</keyword>
<keyword id="KW-0689">Ribosomal protein</keyword>
<reference key="1">
    <citation type="journal article" date="2007" name="Proc. Natl. Acad. Sci. U.S.A.">
        <title>Genomic and metabolic adaptations of Methanobrevibacter smithii to the human gut.</title>
        <authorList>
            <person name="Samuel B.S."/>
            <person name="Hansen E.E."/>
            <person name="Manchester J.K."/>
            <person name="Coutinho P.M."/>
            <person name="Henrissat B."/>
            <person name="Fulton R."/>
            <person name="Latreille P."/>
            <person name="Kim K."/>
            <person name="Wilson R.K."/>
            <person name="Gordon J.I."/>
        </authorList>
    </citation>
    <scope>NUCLEOTIDE SEQUENCE [LARGE SCALE GENOMIC DNA]</scope>
    <source>
        <strain>ATCC 35061 / DSM 861 / OCM 144 / PS</strain>
    </source>
</reference>
<evidence type="ECO:0000255" key="1">
    <source>
        <dbReference type="HAMAP-Rule" id="MF_00359"/>
    </source>
</evidence>
<evidence type="ECO:0000305" key="2"/>
<accession>A5UKY8</accession>
<organism>
    <name type="scientific">Methanobrevibacter smithii (strain ATCC 35061 / DSM 861 / OCM 144 / PS)</name>
    <dbReference type="NCBI Taxonomy" id="420247"/>
    <lineage>
        <taxon>Archaea</taxon>
        <taxon>Methanobacteriati</taxon>
        <taxon>Methanobacteriota</taxon>
        <taxon>Methanomada group</taxon>
        <taxon>Methanobacteria</taxon>
        <taxon>Methanobacteriales</taxon>
        <taxon>Methanobacteriaceae</taxon>
        <taxon>Methanobrevibacter</taxon>
    </lineage>
</organism>
<comment type="similarity">
    <text evidence="1">Belongs to the eukaryotic ribosomal protein eS1 family.</text>
</comment>
<name>RS3A_METS3</name>
<gene>
    <name evidence="1" type="primary">rps3ae</name>
    <name type="ordered locus">Msm_0661</name>
</gene>
<feature type="chain" id="PRO_1000005194" description="Small ribosomal subunit protein eS1">
    <location>
        <begin position="1"/>
        <end position="193"/>
    </location>
</feature>
<sequence length="193" mass="22195">MAKAKARRRVRDTWKEKSWYTIKTPVNFEDKEIGETPARDPDYLIGRGVEVTMRELSGDFSKQYIKLRFEIDNVAGDVANTKFTGHKTTTDYVRSMIRRGTSRIDASSVVKTKDDRKVKLHVLAVTTRRAKSSQQKYMRQVINDLLAETAAEKSFDELIKLVVNGKLASEVYHNAKKIYPLKRVEIIKSKVLN</sequence>
<protein>
    <recommendedName>
        <fullName evidence="1">Small ribosomal subunit protein eS1</fullName>
    </recommendedName>
    <alternativeName>
        <fullName evidence="2">30S ribosomal protein S3Ae</fullName>
    </alternativeName>
    <alternativeName>
        <fullName evidence="1">Ribosomal protein S1e</fullName>
    </alternativeName>
</protein>
<dbReference type="EMBL" id="CP000678">
    <property type="protein sequence ID" value="ABQ86866.1"/>
    <property type="molecule type" value="Genomic_DNA"/>
</dbReference>
<dbReference type="RefSeq" id="WP_004032420.1">
    <property type="nucleotide sequence ID" value="NZ_CP117965.1"/>
</dbReference>
<dbReference type="SMR" id="A5UKY8"/>
<dbReference type="STRING" id="420247.Msm_0661"/>
<dbReference type="EnsemblBacteria" id="ABQ86866">
    <property type="protein sequence ID" value="ABQ86866"/>
    <property type="gene ID" value="Msm_0661"/>
</dbReference>
<dbReference type="KEGG" id="msi:Msm_0661"/>
<dbReference type="PATRIC" id="fig|420247.28.peg.658"/>
<dbReference type="eggNOG" id="arCOG04186">
    <property type="taxonomic scope" value="Archaea"/>
</dbReference>
<dbReference type="HOGENOM" id="CLU_062507_1_0_2"/>
<dbReference type="Proteomes" id="UP000001992">
    <property type="component" value="Chromosome"/>
</dbReference>
<dbReference type="GO" id="GO:1990904">
    <property type="term" value="C:ribonucleoprotein complex"/>
    <property type="evidence" value="ECO:0007669"/>
    <property type="project" value="UniProtKB-KW"/>
</dbReference>
<dbReference type="GO" id="GO:0005840">
    <property type="term" value="C:ribosome"/>
    <property type="evidence" value="ECO:0007669"/>
    <property type="project" value="UniProtKB-KW"/>
</dbReference>
<dbReference type="GO" id="GO:0003735">
    <property type="term" value="F:structural constituent of ribosome"/>
    <property type="evidence" value="ECO:0007669"/>
    <property type="project" value="InterPro"/>
</dbReference>
<dbReference type="GO" id="GO:0006412">
    <property type="term" value="P:translation"/>
    <property type="evidence" value="ECO:0007669"/>
    <property type="project" value="UniProtKB-UniRule"/>
</dbReference>
<dbReference type="HAMAP" id="MF_00359">
    <property type="entry name" value="Ribosomal_eS1"/>
    <property type="match status" value="1"/>
</dbReference>
<dbReference type="InterPro" id="IPR001593">
    <property type="entry name" value="Ribosomal_eS1"/>
</dbReference>
<dbReference type="InterPro" id="IPR030838">
    <property type="entry name" value="Ribosomal_eS1_arc"/>
</dbReference>
<dbReference type="NCBIfam" id="NF003142">
    <property type="entry name" value="PRK04057.1"/>
    <property type="match status" value="1"/>
</dbReference>
<dbReference type="Pfam" id="PF01015">
    <property type="entry name" value="Ribosomal_S3Ae"/>
    <property type="match status" value="1"/>
</dbReference>
<dbReference type="SMART" id="SM01397">
    <property type="entry name" value="Ribosomal_S3Ae"/>
    <property type="match status" value="1"/>
</dbReference>
<proteinExistence type="inferred from homology"/>